<gene>
    <name type="primary">acpA</name>
    <name type="ordered locus">pXO2-64</name>
    <name type="ordered locus">BXB0084</name>
    <name type="ordered locus">GBAA_pXO2_0084</name>
</gene>
<reference key="1">
    <citation type="journal article" date="1995" name="Gene">
        <title>Identification and characterization of a trans-activator involved in the regulation of encapsulation by Bacillus anthracis.</title>
        <authorList>
            <person name="Vietri N.J."/>
            <person name="Marrero R."/>
            <person name="Hoover T.A."/>
            <person name="Welkos S.L."/>
        </authorList>
    </citation>
    <scope>NUCLEOTIDE SEQUENCE [GENOMIC DNA]</scope>
</reference>
<reference key="2">
    <citation type="journal article" date="1999" name="J. Appl. Microbiol.">
        <title>Sequence, assembly and analysis of pXO1 and pXO2.</title>
        <authorList>
            <person name="Okinaka R.T."/>
            <person name="Cloud K."/>
            <person name="Hampton O."/>
            <person name="Hoffmaster A."/>
            <person name="Hill K.K."/>
            <person name="Keim P."/>
            <person name="Koehler T."/>
            <person name="Lamke G."/>
            <person name="Kumano S."/>
            <person name="Manter D."/>
            <person name="Martinez Y."/>
            <person name="Ricke D."/>
            <person name="Svensson R."/>
            <person name="Jackson P.J."/>
        </authorList>
    </citation>
    <scope>NUCLEOTIDE SEQUENCE [GENOMIC DNA]</scope>
    <source>
        <strain>Pasteur</strain>
    </source>
</reference>
<reference key="3">
    <citation type="journal article" date="2002" name="Science">
        <title>Comparative genome sequencing for discovery of novel polymorphisms in Bacillus anthracis.</title>
        <authorList>
            <person name="Read T.D."/>
            <person name="Salzberg S.L."/>
            <person name="Pop M."/>
            <person name="Shumway M.F."/>
            <person name="Umayam L."/>
            <person name="Jiang L."/>
            <person name="Holtzapple E."/>
            <person name="Busch J.D."/>
            <person name="Smith K.L."/>
            <person name="Schupp J.M."/>
            <person name="Solomon D."/>
            <person name="Keim P."/>
            <person name="Fraser C.M."/>
        </authorList>
    </citation>
    <scope>NUCLEOTIDE SEQUENCE [GENOMIC DNA]</scope>
    <source>
        <strain>Ames / isolate Florida / A2012</strain>
    </source>
</reference>
<reference key="4">
    <citation type="journal article" date="2009" name="J. Bacteriol.">
        <title>The complete genome sequence of Bacillus anthracis Ames 'Ancestor'.</title>
        <authorList>
            <person name="Ravel J."/>
            <person name="Jiang L."/>
            <person name="Stanley S.T."/>
            <person name="Wilson M.R."/>
            <person name="Decker R.S."/>
            <person name="Read T.D."/>
            <person name="Worsham P."/>
            <person name="Keim P.S."/>
            <person name="Salzberg S.L."/>
            <person name="Fraser-Liggett C.M."/>
            <person name="Rasko D.A."/>
        </authorList>
    </citation>
    <scope>NUCLEOTIDE SEQUENCE [LARGE SCALE GENOMIC DNA]</scope>
    <source>
        <strain>Ames ancestor</strain>
    </source>
</reference>
<reference key="5">
    <citation type="journal article" date="2004" name="J. Bacteriol.">
        <title>atxA controls Bacillus anthracis capsule synthesis via acpA and a newly discovered regulator, acpB.</title>
        <authorList>
            <person name="Drysdale M."/>
            <person name="Bourgogne A."/>
            <person name="Hilsenbeck S.G."/>
            <person name="Koehler T.M."/>
        </authorList>
    </citation>
    <scope>FUNCTION</scope>
    <scope>INDUCTION</scope>
</reference>
<organism>
    <name type="scientific">Bacillus anthracis</name>
    <dbReference type="NCBI Taxonomy" id="1392"/>
    <lineage>
        <taxon>Bacteria</taxon>
        <taxon>Bacillati</taxon>
        <taxon>Bacillota</taxon>
        <taxon>Bacilli</taxon>
        <taxon>Bacillales</taxon>
        <taxon>Bacillaceae</taxon>
        <taxon>Bacillus</taxon>
        <taxon>Bacillus cereus group</taxon>
    </lineage>
</organism>
<geneLocation type="plasmid">
    <name>pXO2</name>
</geneLocation>
<feature type="chain" id="PRO_0000219546" description="Capsule synthesis positive regulator AcpA">
    <location>
        <begin position="1"/>
        <end position="483"/>
    </location>
</feature>
<feature type="domain" description="PRD 1" evidence="1">
    <location>
        <begin position="165"/>
        <end position="270"/>
    </location>
</feature>
<feature type="domain" description="PRD 2" evidence="1">
    <location>
        <begin position="283"/>
        <end position="394"/>
    </location>
</feature>
<protein>
    <recommendedName>
        <fullName>Capsule synthesis positive regulator AcpA</fullName>
    </recommendedName>
</protein>
<evidence type="ECO:0000255" key="1">
    <source>
        <dbReference type="PROSITE-ProRule" id="PRU00704"/>
    </source>
</evidence>
<evidence type="ECO:0000269" key="2">
    <source>
    </source>
</evidence>
<evidence type="ECO:0000305" key="3"/>
<dbReference type="EMBL" id="U02535">
    <property type="protein sequence ID" value="AAA81894.1"/>
    <property type="molecule type" value="Genomic_DNA"/>
</dbReference>
<dbReference type="EMBL" id="AF188935">
    <property type="protein sequence ID" value="AAF13669.1"/>
    <property type="molecule type" value="Genomic_DNA"/>
</dbReference>
<dbReference type="EMBL" id="AE011191">
    <property type="protein sequence ID" value="AAM26236.1"/>
    <property type="molecule type" value="Genomic_DNA"/>
</dbReference>
<dbReference type="EMBL" id="AE017335">
    <property type="protein sequence ID" value="AAT29014.2"/>
    <property type="molecule type" value="Genomic_DNA"/>
</dbReference>
<dbReference type="PIR" id="I40055">
    <property type="entry name" value="I40055"/>
</dbReference>
<dbReference type="RefSeq" id="NP_053219.1">
    <property type="nucleotide sequence ID" value="NC_002146.1"/>
</dbReference>
<dbReference type="RefSeq" id="WP_000409768.1">
    <property type="nucleotide sequence ID" value="NZ_VTZL01000009.1"/>
</dbReference>
<dbReference type="SMR" id="Q44643"/>
<dbReference type="IntAct" id="Q44643">
    <property type="interactions" value="2"/>
</dbReference>
<dbReference type="GeneID" id="45025376"/>
<dbReference type="KEGG" id="bar:GBAA_pXO2_0084"/>
<dbReference type="HOGENOM" id="CLU_044310_0_0_9"/>
<dbReference type="OMA" id="HTFAISI"/>
<dbReference type="PHI-base" id="PHI:4088"/>
<dbReference type="Proteomes" id="UP000000594">
    <property type="component" value="Plasmid pXO2"/>
</dbReference>
<dbReference type="GO" id="GO:0006355">
    <property type="term" value="P:regulation of DNA-templated transcription"/>
    <property type="evidence" value="ECO:0007669"/>
    <property type="project" value="InterPro"/>
</dbReference>
<dbReference type="Gene3D" id="3.40.50.2300">
    <property type="match status" value="1"/>
</dbReference>
<dbReference type="Gene3D" id="1.10.10.10">
    <property type="entry name" value="Winged helix-like DNA-binding domain superfamily/Winged helix DNA-binding domain"/>
    <property type="match status" value="1"/>
</dbReference>
<dbReference type="InterPro" id="IPR050661">
    <property type="entry name" value="BglG_antiterminators"/>
</dbReference>
<dbReference type="InterPro" id="IPR013199">
    <property type="entry name" value="HTH_Mga_DNA-bd_dom"/>
</dbReference>
<dbReference type="InterPro" id="IPR007737">
    <property type="entry name" value="Mga_HTH"/>
</dbReference>
<dbReference type="InterPro" id="IPR011608">
    <property type="entry name" value="PRD"/>
</dbReference>
<dbReference type="InterPro" id="IPR036634">
    <property type="entry name" value="PRD_sf"/>
</dbReference>
<dbReference type="InterPro" id="IPR036388">
    <property type="entry name" value="WH-like_DNA-bd_sf"/>
</dbReference>
<dbReference type="PANTHER" id="PTHR30185">
    <property type="entry name" value="CRYPTIC BETA-GLUCOSIDE BGL OPERON ANTITERMINATOR"/>
    <property type="match status" value="1"/>
</dbReference>
<dbReference type="PANTHER" id="PTHR30185:SF18">
    <property type="entry name" value="TRANSCRIPTIONAL REGULATOR MTLR"/>
    <property type="match status" value="1"/>
</dbReference>
<dbReference type="Pfam" id="PF08280">
    <property type="entry name" value="HTH_Mga"/>
    <property type="match status" value="1"/>
</dbReference>
<dbReference type="Pfam" id="PF05043">
    <property type="entry name" value="Mga"/>
    <property type="match status" value="1"/>
</dbReference>
<dbReference type="Pfam" id="PF00874">
    <property type="entry name" value="PRD"/>
    <property type="match status" value="1"/>
</dbReference>
<dbReference type="SUPFAM" id="SSF63520">
    <property type="entry name" value="PTS-regulatory domain, PRD"/>
    <property type="match status" value="1"/>
</dbReference>
<dbReference type="PROSITE" id="PS51372">
    <property type="entry name" value="PRD_2"/>
    <property type="match status" value="2"/>
</dbReference>
<name>ACPA_BACAN</name>
<sequence length="483" mass="57035">MEKDISRKIDLLNILIEEKRWFTLFELEKNLNCSSKTIRKDISIINDLLPKTIFIHSKKGKGVKLSLPQNQSISEAISNLLKKSLTFLAIQQLLEERSNTVTSLADKLYLPISSTNIVLKRVSKYIKKFGLSLEKKPLRIVGDEFQIILMFSERYLESYPDTEWPFTEYKEEMLIDYINYIEEKLEIVFYSNDKRRMAFIMTILFKRIKQGHKVKFSEWIIKETMESIYYKKIFEGKNVIKVNKNRSLNIEEQVLLVIMVKLSRYVSKDENNLKQEELVLYKEGESTTYTYVKNFISILEQELKIDLNNNEEFVYGMIEYCREAFHILKFIPILKAPEKDTCKYIKKHYEETFYLVKRAYNKWGAEMKLTDIPDEEIAKVTMRIVAIGKQHNINRKKVLLITGEGKSWEEYMKSRINKRYGDQLKFVGGHAKILNGNTDNIDNIDIDFIITTVPLNFSWKSIVYVSPILQERDFYEIGIFASK</sequence>
<comment type="function">
    <text evidence="2">AcpA and AcpB regulate cap gene expression and capsule synthesis.</text>
</comment>
<comment type="induction">
    <text evidence="2">Transcriptionally regulated by AtxA. Transcription is also positively controlled by carbonic acid and CO(2).</text>
</comment>
<comment type="miscellaneous">
    <text>AcpA has a larger effect on cap gene expression than does AcpB.</text>
</comment>
<comment type="similarity">
    <text evidence="3">Belongs to the AtxA/AcpA family.</text>
</comment>
<accession>Q44643</accession>
<keyword id="KW-0010">Activator</keyword>
<keyword id="KW-0972">Capsule biogenesis/degradation</keyword>
<keyword id="KW-0614">Plasmid</keyword>
<keyword id="KW-1185">Reference proteome</keyword>
<keyword id="KW-0677">Repeat</keyword>
<keyword id="KW-0804">Transcription</keyword>
<keyword id="KW-0805">Transcription regulation</keyword>
<keyword id="KW-0843">Virulence</keyword>
<proteinExistence type="evidence at transcript level"/>